<dbReference type="EMBL" id="AY061892">
    <property type="protein sequence ID" value="AAL31645.1"/>
    <property type="molecule type" value="Genomic_DNA"/>
</dbReference>
<dbReference type="EMBL" id="AY740525">
    <property type="protein sequence ID" value="AAU87360.1"/>
    <property type="molecule type" value="Genomic_DNA"/>
</dbReference>
<dbReference type="EMBL" id="DQ517937">
    <property type="protein sequence ID" value="ABF68755.1"/>
    <property type="molecule type" value="mRNA"/>
</dbReference>
<dbReference type="EMBL" id="EF195745">
    <property type="protein sequence ID" value="ABN42648.1"/>
    <property type="molecule type" value="mRNA"/>
</dbReference>
<dbReference type="EMBL" id="DQ022186">
    <property type="protein sequence ID" value="AAY42865.1"/>
    <property type="molecule type" value="mRNA"/>
</dbReference>
<dbReference type="EMBL" id="AY273793">
    <property type="protein sequence ID" value="AAP33500.1"/>
    <property type="molecule type" value="mRNA"/>
</dbReference>
<dbReference type="EMBL" id="AF537326">
    <property type="protein sequence ID" value="AAN06822.1"/>
    <property type="molecule type" value="mRNA"/>
</dbReference>
<dbReference type="OMA" id="CYTSMCY"/>
<dbReference type="GO" id="GO:0046870">
    <property type="term" value="F:cadmium ion binding"/>
    <property type="evidence" value="ECO:0007669"/>
    <property type="project" value="InterPro"/>
</dbReference>
<dbReference type="InterPro" id="IPR012484">
    <property type="entry name" value="Metalthion_7"/>
</dbReference>
<dbReference type="Pfam" id="PF07846">
    <property type="entry name" value="Metallothio_Cad"/>
    <property type="match status" value="3"/>
</dbReference>
<reference key="1">
    <citation type="journal article" date="2002" name="Proc. Natl. Acad. Sci. U.S.A.">
        <title>A robust inducible-repressible promoter greatly facilitates gene knockouts, conditional expression, and overexpression of homologous and heterologous genes in Tetrahymena thermophila.</title>
        <authorList>
            <person name="Shang Y."/>
            <person name="Song X."/>
            <person name="Bowen J."/>
            <person name="Corstanje R."/>
            <person name="Gao Y."/>
            <person name="Gaertig J."/>
            <person name="Gorovsky M.A."/>
        </authorList>
    </citation>
    <scope>NUCLEOTIDE SEQUENCE [GENOMIC DNA]</scope>
    <scope>INDUCTION</scope>
    <source>
        <strain>CU428</strain>
    </source>
</reference>
<reference key="2">
    <citation type="journal article" date="2007" name="PLoS ONE">
        <title>Tetrahymena metallothioneins fall into two discrete subfamilies.</title>
        <authorList>
            <person name="Diaz S."/>
            <person name="Amaro F."/>
            <person name="Rico D."/>
            <person name="Campos V."/>
            <person name="Benitez L."/>
            <person name="Martin-Gonzalez A."/>
            <person name="Hamilton E.P."/>
            <person name="Orias E."/>
            <person name="Gutierrez J.C."/>
        </authorList>
    </citation>
    <scope>NUCLEOTIDE SEQUENCE [GENOMIC DNA / MRNA]</scope>
    <source>
        <strain>Inbred strain B</strain>
        <strain>SB1969</strain>
    </source>
</reference>
<reference key="3">
    <citation type="submission" date="2005-04" db="EMBL/GenBank/DDBJ databases">
        <title>Evolution of metallothioneins in Tetrahymena thermophila.</title>
        <authorList>
            <person name="Formigari A."/>
            <person name="Santovito G."/>
            <person name="Boldrin F."/>
            <person name="Irato P."/>
            <person name="Piccinni E."/>
        </authorList>
    </citation>
    <scope>NUCLEOTIDE SEQUENCE [MRNA]</scope>
    <source>
        <strain>Inbred B</strain>
    </source>
</reference>
<reference key="4">
    <citation type="submission" date="2003-04" db="EMBL/GenBank/DDBJ databases">
        <title>Tetrahymena thermophila cadmium metallothionein gene.</title>
        <authorList>
            <person name="Miao W."/>
            <person name="Wan M."/>
            <person name="Song Y."/>
        </authorList>
    </citation>
    <scope>NUCLEOTIDE SEQUENCE [MRNA] OF 2-162</scope>
</reference>
<reference key="5">
    <citation type="journal article" date="2004" name="Protist">
        <title>Biochemical characterization and quantitative gene expression analysis of the multi-stress inducible metallothionein from Tetrahymena thermophila.</title>
        <authorList>
            <person name="Dondero F."/>
            <person name="Cavaletto M."/>
            <person name="Ghezzi A.R."/>
            <person name="La Terza A."/>
            <person name="Banni M."/>
            <person name="Viarengo A."/>
        </authorList>
    </citation>
    <scope>NUCLEOTIDE SEQUENCE [MRNA] OF 7-162</scope>
    <scope>PROTEIN SEQUENCE OF 3-17</scope>
    <scope>INDUCTION</scope>
    <scope>MASS SPECTROMETRY</scope>
    <source>
        <strain>CU428</strain>
    </source>
</reference>
<comment type="function">
    <text>The metallothioneins are involved in the cellular sequestration of toxic metal ions.</text>
</comment>
<comment type="induction">
    <text evidence="1 2">By cadmium, and to a lesser extent by mercury, copper, heat, hydrogen peroxide and IL-6.</text>
</comment>
<comment type="mass spectrometry"/>
<comment type="similarity">
    <text evidence="3">Belongs to the metallothionein superfamily. Type 7 family.</text>
</comment>
<name>MTCD_TETTH</name>
<organism>
    <name type="scientific">Tetrahymena thermophila</name>
    <dbReference type="NCBI Taxonomy" id="5911"/>
    <lineage>
        <taxon>Eukaryota</taxon>
        <taxon>Sar</taxon>
        <taxon>Alveolata</taxon>
        <taxon>Ciliophora</taxon>
        <taxon>Intramacronucleata</taxon>
        <taxon>Oligohymenophorea</taxon>
        <taxon>Hymenostomatida</taxon>
        <taxon>Tetrahymenina</taxon>
        <taxon>Tetrahymenidae</taxon>
        <taxon>Tetrahymena</taxon>
    </lineage>
</organism>
<gene>
    <name type="primary">MTT1</name>
</gene>
<protein>
    <recommendedName>
        <fullName>Cadmium metallothionein</fullName>
    </recommendedName>
    <alternativeName>
        <fullName>Cd-MT</fullName>
    </alternativeName>
    <alternativeName>
        <fullName>MT-Cd</fullName>
    </alternativeName>
</protein>
<proteinExistence type="evidence at protein level"/>
<evidence type="ECO:0000269" key="1">
    <source>
    </source>
</evidence>
<evidence type="ECO:0000269" key="2">
    <source>
    </source>
</evidence>
<evidence type="ECO:0000305" key="3"/>
<sequence>MDKVNSCCCGVNAKPCCTDPNSGCCCVSKTDNCCKSDTKECCTGTGEGCKCVNCKCCKPQANCCCGVNAKPCCFDPNSGCCCVSKTNNCCKSDTKECCTGTGEGCKCTSCQCCKPVQQGCCCGDKAKACCTDPNSGCCCSNKANKCCDATSKQECQTCQCCK</sequence>
<feature type="propeptide" id="PRO_0000018673" evidence="2">
    <location>
        <begin position="1"/>
        <end position="2"/>
    </location>
</feature>
<feature type="chain" id="PRO_0000018674" description="Cadmium metallothionein">
    <location>
        <begin position="3"/>
        <end position="162"/>
    </location>
</feature>
<feature type="sequence conflict" description="In Ref. 4; AAP33500." evidence="3" ref="4">
    <original>S</original>
    <variation>NN</variation>
    <location>
        <position position="6"/>
    </location>
</feature>
<feature type="sequence conflict" description="In Ref. 4; AAP33500." evidence="3" ref="4">
    <original>Q</original>
    <variation>K</variation>
    <location>
        <position position="156"/>
    </location>
</feature>
<feature type="sequence conflict" description="In Ref. 4; AAP33500." evidence="3" ref="4">
    <original>Q</original>
    <variation>E</variation>
    <location>
        <position position="159"/>
    </location>
</feature>
<accession>Q8WSW3</accession>
<accession>Q5XQF6</accession>
<accession>Q86BU0</accession>
<accession>Q8IT78</accession>
<keyword id="KW-0104">Cadmium</keyword>
<keyword id="KW-0903">Direct protein sequencing</keyword>
<keyword id="KW-0479">Metal-binding</keyword>
<keyword id="KW-0480">Metal-thiolate cluster</keyword>